<organism>
    <name type="scientific">Homo sapiens</name>
    <name type="common">Human</name>
    <dbReference type="NCBI Taxonomy" id="9606"/>
    <lineage>
        <taxon>Eukaryota</taxon>
        <taxon>Metazoa</taxon>
        <taxon>Chordata</taxon>
        <taxon>Craniata</taxon>
        <taxon>Vertebrata</taxon>
        <taxon>Euteleostomi</taxon>
        <taxon>Mammalia</taxon>
        <taxon>Eutheria</taxon>
        <taxon>Euarchontoglires</taxon>
        <taxon>Primates</taxon>
        <taxon>Haplorrhini</taxon>
        <taxon>Catarrhini</taxon>
        <taxon>Hominidae</taxon>
        <taxon>Homo</taxon>
    </lineage>
</organism>
<accession>Q53TQ3</accession>
<accession>B3KU68</accession>
<accession>B9EG77</accession>
<accession>Q6PJC6</accession>
<accession>Q6PJU1</accession>
<accession>Q6PKA1</accession>
<accession>Q9NXD5</accession>
<dbReference type="EMBL" id="AC007383">
    <property type="status" value="NOT_ANNOTATED_CDS"/>
    <property type="molecule type" value="Genomic_DNA"/>
</dbReference>
<dbReference type="EMBL" id="AC007679">
    <property type="protein sequence ID" value="AAX93069.1"/>
    <property type="status" value="ALT_SEQ"/>
    <property type="molecule type" value="Genomic_DNA"/>
</dbReference>
<dbReference type="EMBL" id="AC092677">
    <property type="status" value="NOT_ANNOTATED_CDS"/>
    <property type="molecule type" value="Genomic_DNA"/>
</dbReference>
<dbReference type="EMBL" id="CH471063">
    <property type="protein sequence ID" value="EAW70375.1"/>
    <property type="status" value="ALT_SEQ"/>
    <property type="molecule type" value="Genomic_DNA"/>
</dbReference>
<dbReference type="EMBL" id="BC004193">
    <property type="protein sequence ID" value="AAH04193.2"/>
    <property type="status" value="ALT_SEQ"/>
    <property type="molecule type" value="mRNA"/>
</dbReference>
<dbReference type="EMBL" id="BC011687">
    <property type="protein sequence ID" value="AAH11687.1"/>
    <property type="status" value="ALT_SEQ"/>
    <property type="molecule type" value="mRNA"/>
</dbReference>
<dbReference type="EMBL" id="BC017290">
    <property type="protein sequence ID" value="AAH17290.2"/>
    <property type="status" value="ALT_SEQ"/>
    <property type="molecule type" value="mRNA"/>
</dbReference>
<dbReference type="EMBL" id="BC136278">
    <property type="protein sequence ID" value="AAI36279.1"/>
    <property type="molecule type" value="mRNA"/>
</dbReference>
<dbReference type="EMBL" id="AK000316">
    <property type="protein sequence ID" value="BAA91079.1"/>
    <property type="status" value="ALT_SEQ"/>
    <property type="molecule type" value="mRNA"/>
</dbReference>
<dbReference type="EMBL" id="AK096585">
    <property type="protein sequence ID" value="BAG53330.1"/>
    <property type="molecule type" value="mRNA"/>
</dbReference>
<dbReference type="CCDS" id="CCDS46500.1"/>
<dbReference type="RefSeq" id="NP_060229.3">
    <property type="nucleotide sequence ID" value="NM_017759.4"/>
</dbReference>
<dbReference type="RefSeq" id="XP_011509672.1">
    <property type="nucleotide sequence ID" value="XM_011511370.3"/>
</dbReference>
<dbReference type="RefSeq" id="XP_011509673.1">
    <property type="nucleotide sequence ID" value="XM_011511371.3"/>
</dbReference>
<dbReference type="RefSeq" id="XP_011509675.1">
    <property type="nucleotide sequence ID" value="XM_011511373.2"/>
</dbReference>
<dbReference type="RefSeq" id="XP_011509677.1">
    <property type="nucleotide sequence ID" value="XM_011511375.2"/>
</dbReference>
<dbReference type="RefSeq" id="XP_011509678.1">
    <property type="nucleotide sequence ID" value="XM_011511376.2"/>
</dbReference>
<dbReference type="SMR" id="Q53TQ3"/>
<dbReference type="BioGRID" id="120238">
    <property type="interactions" value="27"/>
</dbReference>
<dbReference type="ComplexPortal" id="CPX-846">
    <property type="entry name" value="INO80 chromatin remodeling complex"/>
</dbReference>
<dbReference type="CORUM" id="Q53TQ3"/>
<dbReference type="FunCoup" id="Q53TQ3">
    <property type="interactions" value="2068"/>
</dbReference>
<dbReference type="IntAct" id="Q53TQ3">
    <property type="interactions" value="17"/>
</dbReference>
<dbReference type="MINT" id="Q53TQ3"/>
<dbReference type="STRING" id="9606.ENSP00000384198"/>
<dbReference type="GlyGen" id="Q53TQ3">
    <property type="glycosylation" value="2 sites, 1 O-linked glycan (1 site)"/>
</dbReference>
<dbReference type="iPTMnet" id="Q53TQ3"/>
<dbReference type="PhosphoSitePlus" id="Q53TQ3"/>
<dbReference type="BioMuta" id="INO80D"/>
<dbReference type="DMDM" id="189045499"/>
<dbReference type="jPOST" id="Q53TQ3"/>
<dbReference type="MassIVE" id="Q53TQ3"/>
<dbReference type="PaxDb" id="9606-ENSP00000384198"/>
<dbReference type="PeptideAtlas" id="Q53TQ3"/>
<dbReference type="Pumba" id="Q53TQ3"/>
<dbReference type="Antibodypedia" id="51926">
    <property type="antibodies" value="50 antibodies from 13 providers"/>
</dbReference>
<dbReference type="DNASU" id="54891"/>
<dbReference type="Ensembl" id="ENST00000403263.6">
    <property type="protein sequence ID" value="ENSP00000384198.1"/>
    <property type="gene ID" value="ENSG00000114933.16"/>
</dbReference>
<dbReference type="Ensembl" id="ENST00000636453.2">
    <property type="protein sequence ID" value="ENSP00000490850.1"/>
    <property type="gene ID" value="ENSG00000283510.2"/>
</dbReference>
<dbReference type="GeneID" id="54891"/>
<dbReference type="KEGG" id="hsa:54891"/>
<dbReference type="MANE-Select" id="ENST00000403263.6">
    <property type="protein sequence ID" value="ENSP00000384198.1"/>
    <property type="RefSeq nucleotide sequence ID" value="NM_017759.5"/>
    <property type="RefSeq protein sequence ID" value="NP_060229.3"/>
</dbReference>
<dbReference type="UCSC" id="uc002vaz.4">
    <property type="organism name" value="human"/>
</dbReference>
<dbReference type="AGR" id="HGNC:25997"/>
<dbReference type="CTD" id="54891"/>
<dbReference type="DisGeNET" id="54891"/>
<dbReference type="GeneCards" id="INO80D"/>
<dbReference type="HGNC" id="HGNC:25997">
    <property type="gene designation" value="INO80D"/>
</dbReference>
<dbReference type="HPA" id="ENSG00000114933">
    <property type="expression patterns" value="Tissue enhanced (bone)"/>
</dbReference>
<dbReference type="MIM" id="619207">
    <property type="type" value="gene"/>
</dbReference>
<dbReference type="neXtProt" id="NX_Q53TQ3"/>
<dbReference type="OpenTargets" id="ENSG00000114933"/>
<dbReference type="PharmGKB" id="PA162392147"/>
<dbReference type="VEuPathDB" id="HostDB:ENSG00000114933"/>
<dbReference type="eggNOG" id="ENOG502QQC5">
    <property type="taxonomic scope" value="Eukaryota"/>
</dbReference>
<dbReference type="GeneTree" id="ENSGT00940000157974"/>
<dbReference type="HOGENOM" id="CLU_329723_0_0_1"/>
<dbReference type="InParanoid" id="Q53TQ3"/>
<dbReference type="OMA" id="SWRPQNG"/>
<dbReference type="OrthoDB" id="10038011at2759"/>
<dbReference type="PAN-GO" id="Q53TQ3">
    <property type="GO annotations" value="1 GO annotation based on evolutionary models"/>
</dbReference>
<dbReference type="PhylomeDB" id="Q53TQ3"/>
<dbReference type="TreeFam" id="TF324169"/>
<dbReference type="PathwayCommons" id="Q53TQ3"/>
<dbReference type="Reactome" id="R-HSA-5689603">
    <property type="pathway name" value="UCH proteinases"/>
</dbReference>
<dbReference type="Reactome" id="R-HSA-5696394">
    <property type="pathway name" value="DNA Damage Recognition in GG-NER"/>
</dbReference>
<dbReference type="SignaLink" id="Q53TQ3"/>
<dbReference type="SIGNOR" id="Q53TQ3"/>
<dbReference type="BioGRID-ORCS" id="54891">
    <property type="hits" value="19 hits in 1170 CRISPR screens"/>
</dbReference>
<dbReference type="ChiTaRS" id="INO80D">
    <property type="organism name" value="human"/>
</dbReference>
<dbReference type="GenomeRNAi" id="54891"/>
<dbReference type="Pharos" id="Q53TQ3">
    <property type="development level" value="Tdark"/>
</dbReference>
<dbReference type="PRO" id="PR:Q53TQ3"/>
<dbReference type="Proteomes" id="UP000005640">
    <property type="component" value="Chromosome 2"/>
</dbReference>
<dbReference type="RNAct" id="Q53TQ3">
    <property type="molecule type" value="protein"/>
</dbReference>
<dbReference type="Bgee" id="ENSG00000114933">
    <property type="expression patterns" value="Expressed in bone marrow cell and 106 other cell types or tissues"/>
</dbReference>
<dbReference type="ExpressionAtlas" id="Q53TQ3">
    <property type="expression patterns" value="baseline and differential"/>
</dbReference>
<dbReference type="GO" id="GO:0031011">
    <property type="term" value="C:Ino80 complex"/>
    <property type="evidence" value="ECO:0000314"/>
    <property type="project" value="ComplexPortal"/>
</dbReference>
<dbReference type="GO" id="GO:0005654">
    <property type="term" value="C:nucleoplasm"/>
    <property type="evidence" value="ECO:0000304"/>
    <property type="project" value="Reactome"/>
</dbReference>
<dbReference type="GO" id="GO:0005634">
    <property type="term" value="C:nucleus"/>
    <property type="evidence" value="ECO:0000318"/>
    <property type="project" value="GO_Central"/>
</dbReference>
<dbReference type="GO" id="GO:0006338">
    <property type="term" value="P:chromatin remodeling"/>
    <property type="evidence" value="ECO:0000314"/>
    <property type="project" value="ComplexPortal"/>
</dbReference>
<dbReference type="GO" id="GO:0006310">
    <property type="term" value="P:DNA recombination"/>
    <property type="evidence" value="ECO:0007669"/>
    <property type="project" value="UniProtKB-KW"/>
</dbReference>
<dbReference type="GO" id="GO:0006281">
    <property type="term" value="P:DNA repair"/>
    <property type="evidence" value="ECO:0007669"/>
    <property type="project" value="UniProtKB-KW"/>
</dbReference>
<dbReference type="GO" id="GO:0045739">
    <property type="term" value="P:positive regulation of DNA repair"/>
    <property type="evidence" value="ECO:0000266"/>
    <property type="project" value="ComplexPortal"/>
</dbReference>
<dbReference type="GO" id="GO:0045893">
    <property type="term" value="P:positive regulation of DNA-templated transcription"/>
    <property type="evidence" value="ECO:0000315"/>
    <property type="project" value="ComplexPortal"/>
</dbReference>
<dbReference type="GO" id="GO:1904507">
    <property type="term" value="P:positive regulation of telomere maintenance in response to DNA damage"/>
    <property type="evidence" value="ECO:0000266"/>
    <property type="project" value="ComplexPortal"/>
</dbReference>
<dbReference type="GO" id="GO:0051726">
    <property type="term" value="P:regulation of cell cycle"/>
    <property type="evidence" value="ECO:0000315"/>
    <property type="project" value="ComplexPortal"/>
</dbReference>
<dbReference type="GO" id="GO:0033044">
    <property type="term" value="P:regulation of chromosome organization"/>
    <property type="evidence" value="ECO:0000315"/>
    <property type="project" value="ComplexPortal"/>
</dbReference>
<dbReference type="GO" id="GO:0006282">
    <property type="term" value="P:regulation of DNA repair"/>
    <property type="evidence" value="ECO:0000266"/>
    <property type="project" value="ComplexPortal"/>
</dbReference>
<dbReference type="GO" id="GO:0006275">
    <property type="term" value="P:regulation of DNA replication"/>
    <property type="evidence" value="ECO:0000315"/>
    <property type="project" value="ComplexPortal"/>
</dbReference>
<dbReference type="GO" id="GO:0060382">
    <property type="term" value="P:regulation of DNA strand elongation"/>
    <property type="evidence" value="ECO:0000315"/>
    <property type="project" value="ComplexPortal"/>
</dbReference>
<dbReference type="GO" id="GO:0045995">
    <property type="term" value="P:regulation of embryonic development"/>
    <property type="evidence" value="ECO:0000266"/>
    <property type="project" value="ComplexPortal"/>
</dbReference>
<dbReference type="GO" id="GO:0000723">
    <property type="term" value="P:telomere maintenance"/>
    <property type="evidence" value="ECO:0000266"/>
    <property type="project" value="ComplexPortal"/>
</dbReference>
<dbReference type="InterPro" id="IPR025927">
    <property type="entry name" value="Potential_DNA-bd"/>
</dbReference>
<dbReference type="PANTHER" id="PTHR16198">
    <property type="match status" value="1"/>
</dbReference>
<dbReference type="PANTHER" id="PTHR16198:SF2">
    <property type="entry name" value="INO80 COMPLEX SUBUNIT D"/>
    <property type="match status" value="1"/>
</dbReference>
<dbReference type="Pfam" id="PF13891">
    <property type="entry name" value="zf-C3Hc3H"/>
    <property type="match status" value="2"/>
</dbReference>
<evidence type="ECO:0000256" key="1">
    <source>
        <dbReference type="SAM" id="MobiDB-lite"/>
    </source>
</evidence>
<evidence type="ECO:0000269" key="2">
    <source>
    </source>
</evidence>
<evidence type="ECO:0000269" key="3">
    <source>
    </source>
</evidence>
<evidence type="ECO:0000269" key="4">
    <source>
    </source>
</evidence>
<evidence type="ECO:0000269" key="5">
    <source>
    </source>
</evidence>
<evidence type="ECO:0000305" key="6"/>
<evidence type="ECO:0000312" key="7">
    <source>
        <dbReference type="HGNC" id="HGNC:25997"/>
    </source>
</evidence>
<evidence type="ECO:0007744" key="8">
    <source>
    </source>
</evidence>
<evidence type="ECO:0007744" key="9">
    <source>
    </source>
</evidence>
<proteinExistence type="evidence at protein level"/>
<gene>
    <name evidence="7" type="primary">INO80D</name>
</gene>
<keyword id="KW-0227">DNA damage</keyword>
<keyword id="KW-0233">DNA recombination</keyword>
<keyword id="KW-0234">DNA repair</keyword>
<keyword id="KW-1017">Isopeptide bond</keyword>
<keyword id="KW-0539">Nucleus</keyword>
<keyword id="KW-0597">Phosphoprotein</keyword>
<keyword id="KW-1267">Proteomics identification</keyword>
<keyword id="KW-1185">Reference proteome</keyword>
<keyword id="KW-0804">Transcription</keyword>
<keyword id="KW-0805">Transcription regulation</keyword>
<keyword id="KW-0832">Ubl conjugation</keyword>
<feature type="chain" id="PRO_0000319585" description="INO80 complex subunit D">
    <location>
        <begin position="1"/>
        <end position="1027"/>
    </location>
</feature>
<feature type="region of interest" description="Disordered" evidence="1">
    <location>
        <begin position="193"/>
        <end position="278"/>
    </location>
</feature>
<feature type="region of interest" description="Disordered" evidence="1">
    <location>
        <begin position="519"/>
        <end position="574"/>
    </location>
</feature>
<feature type="region of interest" description="Disordered" evidence="1">
    <location>
        <begin position="813"/>
        <end position="850"/>
    </location>
</feature>
<feature type="region of interest" description="Disordered" evidence="1">
    <location>
        <begin position="914"/>
        <end position="969"/>
    </location>
</feature>
<feature type="region of interest" description="Disordered" evidence="1">
    <location>
        <begin position="982"/>
        <end position="1027"/>
    </location>
</feature>
<feature type="compositionally biased region" description="Low complexity" evidence="1">
    <location>
        <begin position="201"/>
        <end position="216"/>
    </location>
</feature>
<feature type="compositionally biased region" description="Polar residues" evidence="1">
    <location>
        <begin position="229"/>
        <end position="257"/>
    </location>
</feature>
<feature type="compositionally biased region" description="Basic residues" evidence="1">
    <location>
        <begin position="525"/>
        <end position="559"/>
    </location>
</feature>
<feature type="compositionally biased region" description="Low complexity" evidence="1">
    <location>
        <begin position="914"/>
        <end position="932"/>
    </location>
</feature>
<feature type="compositionally biased region" description="Polar residues" evidence="1">
    <location>
        <begin position="937"/>
        <end position="954"/>
    </location>
</feature>
<feature type="compositionally biased region" description="Low complexity" evidence="1">
    <location>
        <begin position="1001"/>
        <end position="1027"/>
    </location>
</feature>
<feature type="modified residue" description="Phosphoserine" evidence="8">
    <location>
        <position position="132"/>
    </location>
</feature>
<feature type="cross-link" description="Glycyl lysine isopeptide (Lys-Gly) (interchain with G-Cter in SUMO2)" evidence="9">
    <location>
        <position position="87"/>
    </location>
</feature>
<feature type="sequence variant" id="VAR_039012" description="In dbSNP:rs2909111." evidence="2">
    <original>A</original>
    <variation>V</variation>
    <location>
        <position position="358"/>
    </location>
</feature>
<feature type="sequence conflict" description="In Ref. 4; BAA91079." evidence="6" ref="4">
    <original>F</original>
    <variation>S</variation>
    <location>
        <position position="517"/>
    </location>
</feature>
<feature type="sequence conflict" description="In Ref. 4; BAG53330." evidence="6" ref="4">
    <original>T</original>
    <variation>A</variation>
    <location>
        <position position="608"/>
    </location>
</feature>
<feature type="sequence conflict" description="In Ref. 4; BAA91079." evidence="6" ref="4">
    <original>HSSPHGS</original>
    <variation>AILPHPQ</variation>
    <location>
        <begin position="822"/>
        <end position="828"/>
    </location>
</feature>
<feature type="sequence conflict" description="In Ref. 4; BAG53330." evidence="6" ref="4">
    <original>TFSAEMPIMAQHLLPTQLEV</original>
    <variation>PVCFRGYHRPASVAWGLLLN</variation>
    <location>
        <begin position="859"/>
        <end position="878"/>
    </location>
</feature>
<protein>
    <recommendedName>
        <fullName evidence="6">INO80 complex subunit D</fullName>
    </recommendedName>
</protein>
<reference key="1">
    <citation type="journal article" date="2005" name="Nature">
        <title>Generation and annotation of the DNA sequences of human chromosomes 2 and 4.</title>
        <authorList>
            <person name="Hillier L.W."/>
            <person name="Graves T.A."/>
            <person name="Fulton R.S."/>
            <person name="Fulton L.A."/>
            <person name="Pepin K.H."/>
            <person name="Minx P."/>
            <person name="Wagner-McPherson C."/>
            <person name="Layman D."/>
            <person name="Wylie K."/>
            <person name="Sekhon M."/>
            <person name="Becker M.C."/>
            <person name="Fewell G.A."/>
            <person name="Delehaunty K.D."/>
            <person name="Miner T.L."/>
            <person name="Nash W.E."/>
            <person name="Kremitzki C."/>
            <person name="Oddy L."/>
            <person name="Du H."/>
            <person name="Sun H."/>
            <person name="Bradshaw-Cordum H."/>
            <person name="Ali J."/>
            <person name="Carter J."/>
            <person name="Cordes M."/>
            <person name="Harris A."/>
            <person name="Isak A."/>
            <person name="van Brunt A."/>
            <person name="Nguyen C."/>
            <person name="Du F."/>
            <person name="Courtney L."/>
            <person name="Kalicki J."/>
            <person name="Ozersky P."/>
            <person name="Abbott S."/>
            <person name="Armstrong J."/>
            <person name="Belter E.A."/>
            <person name="Caruso L."/>
            <person name="Cedroni M."/>
            <person name="Cotton M."/>
            <person name="Davidson T."/>
            <person name="Desai A."/>
            <person name="Elliott G."/>
            <person name="Erb T."/>
            <person name="Fronick C."/>
            <person name="Gaige T."/>
            <person name="Haakenson W."/>
            <person name="Haglund K."/>
            <person name="Holmes A."/>
            <person name="Harkins R."/>
            <person name="Kim K."/>
            <person name="Kruchowski S.S."/>
            <person name="Strong C.M."/>
            <person name="Grewal N."/>
            <person name="Goyea E."/>
            <person name="Hou S."/>
            <person name="Levy A."/>
            <person name="Martinka S."/>
            <person name="Mead K."/>
            <person name="McLellan M.D."/>
            <person name="Meyer R."/>
            <person name="Randall-Maher J."/>
            <person name="Tomlinson C."/>
            <person name="Dauphin-Kohlberg S."/>
            <person name="Kozlowicz-Reilly A."/>
            <person name="Shah N."/>
            <person name="Swearengen-Shahid S."/>
            <person name="Snider J."/>
            <person name="Strong J.T."/>
            <person name="Thompson J."/>
            <person name="Yoakum M."/>
            <person name="Leonard S."/>
            <person name="Pearman C."/>
            <person name="Trani L."/>
            <person name="Radionenko M."/>
            <person name="Waligorski J.E."/>
            <person name="Wang C."/>
            <person name="Rock S.M."/>
            <person name="Tin-Wollam A.-M."/>
            <person name="Maupin R."/>
            <person name="Latreille P."/>
            <person name="Wendl M.C."/>
            <person name="Yang S.-P."/>
            <person name="Pohl C."/>
            <person name="Wallis J.W."/>
            <person name="Spieth J."/>
            <person name="Bieri T.A."/>
            <person name="Berkowicz N."/>
            <person name="Nelson J.O."/>
            <person name="Osborne J."/>
            <person name="Ding L."/>
            <person name="Meyer R."/>
            <person name="Sabo A."/>
            <person name="Shotland Y."/>
            <person name="Sinha P."/>
            <person name="Wohldmann P.E."/>
            <person name="Cook L.L."/>
            <person name="Hickenbotham M.T."/>
            <person name="Eldred J."/>
            <person name="Williams D."/>
            <person name="Jones T.A."/>
            <person name="She X."/>
            <person name="Ciccarelli F.D."/>
            <person name="Izaurralde E."/>
            <person name="Taylor J."/>
            <person name="Schmutz J."/>
            <person name="Myers R.M."/>
            <person name="Cox D.R."/>
            <person name="Huang X."/>
            <person name="McPherson J.D."/>
            <person name="Mardis E.R."/>
            <person name="Clifton S.W."/>
            <person name="Warren W.C."/>
            <person name="Chinwalla A.T."/>
            <person name="Eddy S.R."/>
            <person name="Marra M.A."/>
            <person name="Ovcharenko I."/>
            <person name="Furey T.S."/>
            <person name="Miller W."/>
            <person name="Eichler E.E."/>
            <person name="Bork P."/>
            <person name="Suyama M."/>
            <person name="Torrents D."/>
            <person name="Waterston R.H."/>
            <person name="Wilson R.K."/>
        </authorList>
    </citation>
    <scope>NUCLEOTIDE SEQUENCE [LARGE SCALE GENOMIC DNA]</scope>
</reference>
<reference key="2">
    <citation type="submission" date="2005-07" db="EMBL/GenBank/DDBJ databases">
        <authorList>
            <person name="Mural R.J."/>
            <person name="Istrail S."/>
            <person name="Sutton G.G."/>
            <person name="Florea L."/>
            <person name="Halpern A.L."/>
            <person name="Mobarry C.M."/>
            <person name="Lippert R."/>
            <person name="Walenz B."/>
            <person name="Shatkay H."/>
            <person name="Dew I."/>
            <person name="Miller J.R."/>
            <person name="Flanigan M.J."/>
            <person name="Edwards N.J."/>
            <person name="Bolanos R."/>
            <person name="Fasulo D."/>
            <person name="Halldorsson B.V."/>
            <person name="Hannenhalli S."/>
            <person name="Turner R."/>
            <person name="Yooseph S."/>
            <person name="Lu F."/>
            <person name="Nusskern D.R."/>
            <person name="Shue B.C."/>
            <person name="Zheng X.H."/>
            <person name="Zhong F."/>
            <person name="Delcher A.L."/>
            <person name="Huson D.H."/>
            <person name="Kravitz S.A."/>
            <person name="Mouchard L."/>
            <person name="Reinert K."/>
            <person name="Remington K.A."/>
            <person name="Clark A.G."/>
            <person name="Waterman M.S."/>
            <person name="Eichler E.E."/>
            <person name="Adams M.D."/>
            <person name="Hunkapiller M.W."/>
            <person name="Myers E.W."/>
            <person name="Venter J.C."/>
        </authorList>
    </citation>
    <scope>NUCLEOTIDE SEQUENCE [LARGE SCALE GENOMIC DNA]</scope>
</reference>
<reference key="3">
    <citation type="journal article" date="2004" name="Genome Res.">
        <title>The status, quality, and expansion of the NIH full-length cDNA project: the Mammalian Gene Collection (MGC).</title>
        <authorList>
            <consortium name="The MGC Project Team"/>
        </authorList>
    </citation>
    <scope>NUCLEOTIDE SEQUENCE [LARGE SCALE MRNA]</scope>
    <source>
        <tissue>Muscle</tissue>
        <tissue>Testis</tissue>
    </source>
</reference>
<reference key="4">
    <citation type="journal article" date="2004" name="Nat. Genet.">
        <title>Complete sequencing and characterization of 21,243 full-length human cDNAs.</title>
        <authorList>
            <person name="Ota T."/>
            <person name="Suzuki Y."/>
            <person name="Nishikawa T."/>
            <person name="Otsuki T."/>
            <person name="Sugiyama T."/>
            <person name="Irie R."/>
            <person name="Wakamatsu A."/>
            <person name="Hayashi K."/>
            <person name="Sato H."/>
            <person name="Nagai K."/>
            <person name="Kimura K."/>
            <person name="Makita H."/>
            <person name="Sekine M."/>
            <person name="Obayashi M."/>
            <person name="Nishi T."/>
            <person name="Shibahara T."/>
            <person name="Tanaka T."/>
            <person name="Ishii S."/>
            <person name="Yamamoto J."/>
            <person name="Saito K."/>
            <person name="Kawai Y."/>
            <person name="Isono Y."/>
            <person name="Nakamura Y."/>
            <person name="Nagahari K."/>
            <person name="Murakami K."/>
            <person name="Yasuda T."/>
            <person name="Iwayanagi T."/>
            <person name="Wagatsuma M."/>
            <person name="Shiratori A."/>
            <person name="Sudo H."/>
            <person name="Hosoiri T."/>
            <person name="Kaku Y."/>
            <person name="Kodaira H."/>
            <person name="Kondo H."/>
            <person name="Sugawara M."/>
            <person name="Takahashi M."/>
            <person name="Kanda K."/>
            <person name="Yokoi T."/>
            <person name="Furuya T."/>
            <person name="Kikkawa E."/>
            <person name="Omura Y."/>
            <person name="Abe K."/>
            <person name="Kamihara K."/>
            <person name="Katsuta N."/>
            <person name="Sato K."/>
            <person name="Tanikawa M."/>
            <person name="Yamazaki M."/>
            <person name="Ninomiya K."/>
            <person name="Ishibashi T."/>
            <person name="Yamashita H."/>
            <person name="Murakawa K."/>
            <person name="Fujimori K."/>
            <person name="Tanai H."/>
            <person name="Kimata M."/>
            <person name="Watanabe M."/>
            <person name="Hiraoka S."/>
            <person name="Chiba Y."/>
            <person name="Ishida S."/>
            <person name="Ono Y."/>
            <person name="Takiguchi S."/>
            <person name="Watanabe S."/>
            <person name="Yosida M."/>
            <person name="Hotuta T."/>
            <person name="Kusano J."/>
            <person name="Kanehori K."/>
            <person name="Takahashi-Fujii A."/>
            <person name="Hara H."/>
            <person name="Tanase T.-O."/>
            <person name="Nomura Y."/>
            <person name="Togiya S."/>
            <person name="Komai F."/>
            <person name="Hara R."/>
            <person name="Takeuchi K."/>
            <person name="Arita M."/>
            <person name="Imose N."/>
            <person name="Musashino K."/>
            <person name="Yuuki H."/>
            <person name="Oshima A."/>
            <person name="Sasaki N."/>
            <person name="Aotsuka S."/>
            <person name="Yoshikawa Y."/>
            <person name="Matsunawa H."/>
            <person name="Ichihara T."/>
            <person name="Shiohata N."/>
            <person name="Sano S."/>
            <person name="Moriya S."/>
            <person name="Momiyama H."/>
            <person name="Satoh N."/>
            <person name="Takami S."/>
            <person name="Terashima Y."/>
            <person name="Suzuki O."/>
            <person name="Nakagawa S."/>
            <person name="Senoh A."/>
            <person name="Mizoguchi H."/>
            <person name="Goto Y."/>
            <person name="Shimizu F."/>
            <person name="Wakebe H."/>
            <person name="Hishigaki H."/>
            <person name="Watanabe T."/>
            <person name="Sugiyama A."/>
            <person name="Takemoto M."/>
            <person name="Kawakami B."/>
            <person name="Yamazaki M."/>
            <person name="Watanabe K."/>
            <person name="Kumagai A."/>
            <person name="Itakura S."/>
            <person name="Fukuzumi Y."/>
            <person name="Fujimori Y."/>
            <person name="Komiyama M."/>
            <person name="Tashiro H."/>
            <person name="Tanigami A."/>
            <person name="Fujiwara T."/>
            <person name="Ono T."/>
            <person name="Yamada K."/>
            <person name="Fujii Y."/>
            <person name="Ozaki K."/>
            <person name="Hirao M."/>
            <person name="Ohmori Y."/>
            <person name="Kawabata A."/>
            <person name="Hikiji T."/>
            <person name="Kobatake N."/>
            <person name="Inagaki H."/>
            <person name="Ikema Y."/>
            <person name="Okamoto S."/>
            <person name="Okitani R."/>
            <person name="Kawakami T."/>
            <person name="Noguchi S."/>
            <person name="Itoh T."/>
            <person name="Shigeta K."/>
            <person name="Senba T."/>
            <person name="Matsumura K."/>
            <person name="Nakajima Y."/>
            <person name="Mizuno T."/>
            <person name="Morinaga M."/>
            <person name="Sasaki M."/>
            <person name="Togashi T."/>
            <person name="Oyama M."/>
            <person name="Hata H."/>
            <person name="Watanabe M."/>
            <person name="Komatsu T."/>
            <person name="Mizushima-Sugano J."/>
            <person name="Satoh T."/>
            <person name="Shirai Y."/>
            <person name="Takahashi Y."/>
            <person name="Nakagawa K."/>
            <person name="Okumura K."/>
            <person name="Nagase T."/>
            <person name="Nomura N."/>
            <person name="Kikuchi H."/>
            <person name="Masuho Y."/>
            <person name="Yamashita R."/>
            <person name="Nakai K."/>
            <person name="Yada T."/>
            <person name="Nakamura Y."/>
            <person name="Ohara O."/>
            <person name="Isogai T."/>
            <person name="Sugano S."/>
        </authorList>
    </citation>
    <scope>NUCLEOTIDE SEQUENCE [LARGE SCALE MRNA] OF 1-878</scope>
    <scope>VARIANT VAL-358</scope>
    <source>
        <tissue>Fetal brain</tissue>
        <tissue>Hepatoma</tissue>
    </source>
</reference>
<reference key="5">
    <citation type="journal article" date="2005" name="J. Biol. Chem.">
        <title>A mammalian chromatin remodeling complex with similarities to the yeast INO80 complex.</title>
        <authorList>
            <person name="Jin J."/>
            <person name="Cai Y."/>
            <person name="Yao T."/>
            <person name="Gottschalk A.J."/>
            <person name="Florens L."/>
            <person name="Swanson S.K."/>
            <person name="Gutierrez J.L."/>
            <person name="Coleman M.K."/>
            <person name="Workman J.L."/>
            <person name="Mushegian A."/>
            <person name="Washburn M.P."/>
            <person name="Conaway R.C."/>
            <person name="Conaway J.W."/>
        </authorList>
    </citation>
    <scope>IDENTIFICATION IN INO80 COMPLEX</scope>
    <scope>IDENTIFICATION BY MASS SPECTROMETRY</scope>
</reference>
<reference key="6">
    <citation type="journal article" date="2008" name="Mol. Cell">
        <title>Distinct modes of regulation of the Uch37 deubiquitinating enzyme in the proteasome and in the Ino80 chromatin-remodeling complex.</title>
        <authorList>
            <person name="Yao T."/>
            <person name="Song L."/>
            <person name="Jin J."/>
            <person name="Cai Y."/>
            <person name="Takahashi H."/>
            <person name="Swanson S.K."/>
            <person name="Washburn M.P."/>
            <person name="Florens L."/>
            <person name="Conaway R.C."/>
            <person name="Cohen R.E."/>
            <person name="Conaway J.W."/>
        </authorList>
    </citation>
    <scope>IDENTIFICATION IN THE INO80 COMPLEX</scope>
    <scope>SUBCELLULAR LOCATION</scope>
    <scope>IDENTIFICATION BY MASS SPECTROMETRY</scope>
</reference>
<reference key="7">
    <citation type="journal article" date="2011" name="J. Biol. Chem.">
        <title>Subunit organization of the human INO80 chromatin remodeling complex: An evolutionarily conserved core complex catalyzes ATP-dependent nucleosome remodeling.</title>
        <authorList>
            <person name="Chen L."/>
            <person name="Cai Y."/>
            <person name="Jin J."/>
            <person name="Florens L."/>
            <person name="Swanson S.K."/>
            <person name="Washburn M.P."/>
            <person name="Conaway J.W."/>
            <person name="Conaway R.C."/>
        </authorList>
    </citation>
    <scope>IDENTIFICATION IN THE INO80 COMPLEX</scope>
</reference>
<reference key="8">
    <citation type="journal article" date="2013" name="J. Proteome Res.">
        <title>Toward a comprehensive characterization of a human cancer cell phosphoproteome.</title>
        <authorList>
            <person name="Zhou H."/>
            <person name="Di Palma S."/>
            <person name="Preisinger C."/>
            <person name="Peng M."/>
            <person name="Polat A.N."/>
            <person name="Heck A.J."/>
            <person name="Mohammed S."/>
        </authorList>
    </citation>
    <scope>PHOSPHORYLATION [LARGE SCALE ANALYSIS] AT SER-132</scope>
    <scope>IDENTIFICATION BY MASS SPECTROMETRY [LARGE SCALE ANALYSIS]</scope>
    <source>
        <tissue>Erythroleukemia</tissue>
    </source>
</reference>
<reference key="9">
    <citation type="journal article" date="2017" name="Nat. Struct. Mol. Biol.">
        <title>Site-specific mapping of the human SUMO proteome reveals co-modification with phosphorylation.</title>
        <authorList>
            <person name="Hendriks I.A."/>
            <person name="Lyon D."/>
            <person name="Young C."/>
            <person name="Jensen L.J."/>
            <person name="Vertegaal A.C."/>
            <person name="Nielsen M.L."/>
        </authorList>
    </citation>
    <scope>SUMOYLATION [LARGE SCALE ANALYSIS] AT LYS-87</scope>
    <scope>IDENTIFICATION BY MASS SPECTROMETRY [LARGE SCALE ANALYSIS]</scope>
</reference>
<name>IN80D_HUMAN</name>
<sequence>MYEGKHIHFSEVDNKPLCSYSPKLCKQRRLNGYAFCIRHVLEDKTAPFKQCEYVAKYNSQRCTNPIPKSEDRRYCNSHLQVLGFIPKKERKKKNDPIDEVKVRHQMDTMAFSLTVPTLALKMPNGLDGMSLSPPGARVPLHYLETELEDPFAFNEEDDDLKKGATVRKKLQSKLAQNRQRQRETEILKVRQEHFSPPPAPSQQQPPQQHSHLSPLSTSLKPPAPPQGSVCKSPQPQNTSLPMQGVAPTTHTIAQARQLSHKRPLPLLPSSRAPTVDPPRTDRILMKATAFSPHFSCISRLQRLVKLCTQKHQLDTDLFPHLGLDWSEESGEEPEDSEQASPYQVAWSIRETLRYQRHASDDDDAESRSSRVTQLCTYFQQKYKHLCRLERAESRQKKCRHTFRKALLQAASKEPECTGQLIQELRRAACSRTSISRTKLREVEPAACSGTVKGEQCANKALPFTRHCFQHILLNHSQQLFSSCTAKFADGQQCSVPVFDITHQTPLCEEHAKKMDNFLRGDNSRKVQHQQQRKPRKKTKPPALTKKHKKKRRRGPRRPQKPIPPAVPQGNLSMPASVSLPVEASHIRSPSTPELSADELPDDIANEITDIPHDLELNQEDFSDVLPRLPDDLQDFDFFEGKNGDLLPTTEEAEELERALQAVTSLECLSTIGVLAQSDGVPVQELSDRGIGVFSTGTGASGIQSLSREVNTDLGELLNGRIVHDNFSSLELDENLLRSATLSNPPTPLAGQIQGQFSAPANVGLTSATLISQSALGERAFPGQFHGLHDGSHASQRPHPAQLLSKADDLITSRQQYSSDHSHSSPHGSHYDSEHVPSPYSDHITSPHTTSYSGDNMAATFSAEMPIMAQHLLPTQLEVPLGGVVNPRTHWGNLPVNLGDPSPFSNLLGADGHLLSTSLSTPPTTSNSETTQPAFATVTPSSSSVLPGLPQTSFSGMGPSAELMASTSPKQQLPQFSAAFGHQLSSHSGIPKDLQPSHSSIAPPTGFTVTGATATSTNNASSPFPSPN</sequence>
<comment type="function">
    <text>Putative regulatory component of the chromatin remodeling INO80 complex which is involved in transcriptional regulation, DNA replication and probably DNA repair.</text>
</comment>
<comment type="subunit">
    <text evidence="3 4 5">Component of the chromatin remodeling INO80 complex; specifically part of a complex module associated with the N-terminus of INO80.</text>
</comment>
<comment type="subcellular location">
    <subcellularLocation>
        <location evidence="4">Nucleus</location>
    </subcellularLocation>
</comment>
<comment type="similarity">
    <text evidence="6">Belongs to the INO80D family.</text>
</comment>
<comment type="sequence caution" evidence="6">
    <conflict type="miscellaneous discrepancy">
        <sequence resource="EMBL-CDS" id="AAH04193"/>
    </conflict>
    <text>Contaminating sequence. Potential poly-A sequence.</text>
</comment>
<comment type="sequence caution" evidence="6">
    <conflict type="erroneous initiation">
        <sequence resource="EMBL-CDS" id="AAH11687"/>
    </conflict>
    <text>Truncated N-terminus.</text>
</comment>
<comment type="sequence caution" evidence="6">
    <conflict type="miscellaneous discrepancy">
        <sequence resource="EMBL-CDS" id="AAH11687"/>
    </conflict>
    <text>Contaminating sequence. Potential poly-A sequence.</text>
</comment>
<comment type="sequence caution" evidence="6">
    <conflict type="miscellaneous discrepancy">
        <sequence resource="EMBL-CDS" id="AAH17290"/>
    </conflict>
    <text>Contaminating sequence. Potential poly-A sequence.</text>
</comment>
<comment type="sequence caution" evidence="6">
    <conflict type="erroneous gene model prediction">
        <sequence resource="EMBL-CDS" id="AAX93069"/>
    </conflict>
</comment>
<comment type="sequence caution" evidence="6">
    <conflict type="erroneous initiation">
        <sequence resource="EMBL-CDS" id="BAA91079"/>
    </conflict>
    <text>Truncated N-terminus.</text>
</comment>
<comment type="sequence caution" evidence="6">
    <conflict type="frameshift">
        <sequence resource="EMBL-CDS" id="BAA91079"/>
    </conflict>
</comment>
<comment type="sequence caution" evidence="6">
    <conflict type="miscellaneous discrepancy">
        <sequence resource="EMBL-CDS" id="BAA91079"/>
    </conflict>
    <text>Contaminating sequence. Potential poly-A sequence.</text>
</comment>
<comment type="sequence caution" evidence="6">
    <conflict type="erroneous gene model prediction">
        <sequence resource="EMBL-CDS" id="EAW70375"/>
    </conflict>
</comment>